<feature type="chain" id="PRO_0000233989" description="Zinc finger protein 670">
    <location>
        <begin position="1"/>
        <end position="389"/>
    </location>
</feature>
<feature type="domain" description="KRAB" evidence="2">
    <location>
        <begin position="4"/>
        <end position="90"/>
    </location>
</feature>
<feature type="zinc finger region" description="C2H2-type 1" evidence="1">
    <location>
        <begin position="103"/>
        <end position="125"/>
    </location>
</feature>
<feature type="zinc finger region" description="C2H2-type 2" evidence="1">
    <location>
        <begin position="141"/>
        <end position="163"/>
    </location>
</feature>
<feature type="zinc finger region" description="C2H2-type 3" evidence="1">
    <location>
        <begin position="197"/>
        <end position="219"/>
    </location>
</feature>
<feature type="zinc finger region" description="C2H2-type 4" evidence="1">
    <location>
        <begin position="225"/>
        <end position="247"/>
    </location>
</feature>
<feature type="zinc finger region" description="C2H2-type 5" evidence="1">
    <location>
        <begin position="253"/>
        <end position="275"/>
    </location>
</feature>
<feature type="zinc finger region" description="C2H2-type 6" evidence="1">
    <location>
        <begin position="281"/>
        <end position="303"/>
    </location>
</feature>
<feature type="zinc finger region" description="C2H2-type 7" evidence="1">
    <location>
        <begin position="309"/>
        <end position="331"/>
    </location>
</feature>
<feature type="zinc finger region" description="C2H2-type 8" evidence="1">
    <location>
        <begin position="337"/>
        <end position="359"/>
    </location>
</feature>
<feature type="zinc finger region" description="C2H2-type 9; degenerate" evidence="1">
    <location>
        <begin position="365"/>
        <end position="387"/>
    </location>
</feature>
<feature type="modified residue" description="Phosphotyrosine" evidence="4">
    <location>
        <position position="281"/>
    </location>
</feature>
<proteinExistence type="evidence at protein level"/>
<name>ZN670_HUMAN</name>
<reference key="1">
    <citation type="journal article" date="2004" name="Nat. Genet.">
        <title>Complete sequencing and characterization of 21,243 full-length human cDNAs.</title>
        <authorList>
            <person name="Ota T."/>
            <person name="Suzuki Y."/>
            <person name="Nishikawa T."/>
            <person name="Otsuki T."/>
            <person name="Sugiyama T."/>
            <person name="Irie R."/>
            <person name="Wakamatsu A."/>
            <person name="Hayashi K."/>
            <person name="Sato H."/>
            <person name="Nagai K."/>
            <person name="Kimura K."/>
            <person name="Makita H."/>
            <person name="Sekine M."/>
            <person name="Obayashi M."/>
            <person name="Nishi T."/>
            <person name="Shibahara T."/>
            <person name="Tanaka T."/>
            <person name="Ishii S."/>
            <person name="Yamamoto J."/>
            <person name="Saito K."/>
            <person name="Kawai Y."/>
            <person name="Isono Y."/>
            <person name="Nakamura Y."/>
            <person name="Nagahari K."/>
            <person name="Murakami K."/>
            <person name="Yasuda T."/>
            <person name="Iwayanagi T."/>
            <person name="Wagatsuma M."/>
            <person name="Shiratori A."/>
            <person name="Sudo H."/>
            <person name="Hosoiri T."/>
            <person name="Kaku Y."/>
            <person name="Kodaira H."/>
            <person name="Kondo H."/>
            <person name="Sugawara M."/>
            <person name="Takahashi M."/>
            <person name="Kanda K."/>
            <person name="Yokoi T."/>
            <person name="Furuya T."/>
            <person name="Kikkawa E."/>
            <person name="Omura Y."/>
            <person name="Abe K."/>
            <person name="Kamihara K."/>
            <person name="Katsuta N."/>
            <person name="Sato K."/>
            <person name="Tanikawa M."/>
            <person name="Yamazaki M."/>
            <person name="Ninomiya K."/>
            <person name="Ishibashi T."/>
            <person name="Yamashita H."/>
            <person name="Murakawa K."/>
            <person name="Fujimori K."/>
            <person name="Tanai H."/>
            <person name="Kimata M."/>
            <person name="Watanabe M."/>
            <person name="Hiraoka S."/>
            <person name="Chiba Y."/>
            <person name="Ishida S."/>
            <person name="Ono Y."/>
            <person name="Takiguchi S."/>
            <person name="Watanabe S."/>
            <person name="Yosida M."/>
            <person name="Hotuta T."/>
            <person name="Kusano J."/>
            <person name="Kanehori K."/>
            <person name="Takahashi-Fujii A."/>
            <person name="Hara H."/>
            <person name="Tanase T.-O."/>
            <person name="Nomura Y."/>
            <person name="Togiya S."/>
            <person name="Komai F."/>
            <person name="Hara R."/>
            <person name="Takeuchi K."/>
            <person name="Arita M."/>
            <person name="Imose N."/>
            <person name="Musashino K."/>
            <person name="Yuuki H."/>
            <person name="Oshima A."/>
            <person name="Sasaki N."/>
            <person name="Aotsuka S."/>
            <person name="Yoshikawa Y."/>
            <person name="Matsunawa H."/>
            <person name="Ichihara T."/>
            <person name="Shiohata N."/>
            <person name="Sano S."/>
            <person name="Moriya S."/>
            <person name="Momiyama H."/>
            <person name="Satoh N."/>
            <person name="Takami S."/>
            <person name="Terashima Y."/>
            <person name="Suzuki O."/>
            <person name="Nakagawa S."/>
            <person name="Senoh A."/>
            <person name="Mizoguchi H."/>
            <person name="Goto Y."/>
            <person name="Shimizu F."/>
            <person name="Wakebe H."/>
            <person name="Hishigaki H."/>
            <person name="Watanabe T."/>
            <person name="Sugiyama A."/>
            <person name="Takemoto M."/>
            <person name="Kawakami B."/>
            <person name="Yamazaki M."/>
            <person name="Watanabe K."/>
            <person name="Kumagai A."/>
            <person name="Itakura S."/>
            <person name="Fukuzumi Y."/>
            <person name="Fujimori Y."/>
            <person name="Komiyama M."/>
            <person name="Tashiro H."/>
            <person name="Tanigami A."/>
            <person name="Fujiwara T."/>
            <person name="Ono T."/>
            <person name="Yamada K."/>
            <person name="Fujii Y."/>
            <person name="Ozaki K."/>
            <person name="Hirao M."/>
            <person name="Ohmori Y."/>
            <person name="Kawabata A."/>
            <person name="Hikiji T."/>
            <person name="Kobatake N."/>
            <person name="Inagaki H."/>
            <person name="Ikema Y."/>
            <person name="Okamoto S."/>
            <person name="Okitani R."/>
            <person name="Kawakami T."/>
            <person name="Noguchi S."/>
            <person name="Itoh T."/>
            <person name="Shigeta K."/>
            <person name="Senba T."/>
            <person name="Matsumura K."/>
            <person name="Nakajima Y."/>
            <person name="Mizuno T."/>
            <person name="Morinaga M."/>
            <person name="Sasaki M."/>
            <person name="Togashi T."/>
            <person name="Oyama M."/>
            <person name="Hata H."/>
            <person name="Watanabe M."/>
            <person name="Komatsu T."/>
            <person name="Mizushima-Sugano J."/>
            <person name="Satoh T."/>
            <person name="Shirai Y."/>
            <person name="Takahashi Y."/>
            <person name="Nakagawa K."/>
            <person name="Okumura K."/>
            <person name="Nagase T."/>
            <person name="Nomura N."/>
            <person name="Kikuchi H."/>
            <person name="Masuho Y."/>
            <person name="Yamashita R."/>
            <person name="Nakai K."/>
            <person name="Yada T."/>
            <person name="Nakamura Y."/>
            <person name="Ohara O."/>
            <person name="Isogai T."/>
            <person name="Sugano S."/>
        </authorList>
    </citation>
    <scope>NUCLEOTIDE SEQUENCE [LARGE SCALE MRNA]</scope>
    <source>
        <tissue>Teratocarcinoma</tissue>
    </source>
</reference>
<reference key="2">
    <citation type="journal article" date="2006" name="Nature">
        <title>The DNA sequence and biological annotation of human chromosome 1.</title>
        <authorList>
            <person name="Gregory S.G."/>
            <person name="Barlow K.F."/>
            <person name="McLay K.E."/>
            <person name="Kaul R."/>
            <person name="Swarbreck D."/>
            <person name="Dunham A."/>
            <person name="Scott C.E."/>
            <person name="Howe K.L."/>
            <person name="Woodfine K."/>
            <person name="Spencer C.C.A."/>
            <person name="Jones M.C."/>
            <person name="Gillson C."/>
            <person name="Searle S."/>
            <person name="Zhou Y."/>
            <person name="Kokocinski F."/>
            <person name="McDonald L."/>
            <person name="Evans R."/>
            <person name="Phillips K."/>
            <person name="Atkinson A."/>
            <person name="Cooper R."/>
            <person name="Jones C."/>
            <person name="Hall R.E."/>
            <person name="Andrews T.D."/>
            <person name="Lloyd C."/>
            <person name="Ainscough R."/>
            <person name="Almeida J.P."/>
            <person name="Ambrose K.D."/>
            <person name="Anderson F."/>
            <person name="Andrew R.W."/>
            <person name="Ashwell R.I.S."/>
            <person name="Aubin K."/>
            <person name="Babbage A.K."/>
            <person name="Bagguley C.L."/>
            <person name="Bailey J."/>
            <person name="Beasley H."/>
            <person name="Bethel G."/>
            <person name="Bird C.P."/>
            <person name="Bray-Allen S."/>
            <person name="Brown J.Y."/>
            <person name="Brown A.J."/>
            <person name="Buckley D."/>
            <person name="Burton J."/>
            <person name="Bye J."/>
            <person name="Carder C."/>
            <person name="Chapman J.C."/>
            <person name="Clark S.Y."/>
            <person name="Clarke G."/>
            <person name="Clee C."/>
            <person name="Cobley V."/>
            <person name="Collier R.E."/>
            <person name="Corby N."/>
            <person name="Coville G.J."/>
            <person name="Davies J."/>
            <person name="Deadman R."/>
            <person name="Dunn M."/>
            <person name="Earthrowl M."/>
            <person name="Ellington A.G."/>
            <person name="Errington H."/>
            <person name="Frankish A."/>
            <person name="Frankland J."/>
            <person name="French L."/>
            <person name="Garner P."/>
            <person name="Garnett J."/>
            <person name="Gay L."/>
            <person name="Ghori M.R.J."/>
            <person name="Gibson R."/>
            <person name="Gilby L.M."/>
            <person name="Gillett W."/>
            <person name="Glithero R.J."/>
            <person name="Grafham D.V."/>
            <person name="Griffiths C."/>
            <person name="Griffiths-Jones S."/>
            <person name="Grocock R."/>
            <person name="Hammond S."/>
            <person name="Harrison E.S.I."/>
            <person name="Hart E."/>
            <person name="Haugen E."/>
            <person name="Heath P.D."/>
            <person name="Holmes S."/>
            <person name="Holt K."/>
            <person name="Howden P.J."/>
            <person name="Hunt A.R."/>
            <person name="Hunt S.E."/>
            <person name="Hunter G."/>
            <person name="Isherwood J."/>
            <person name="James R."/>
            <person name="Johnson C."/>
            <person name="Johnson D."/>
            <person name="Joy A."/>
            <person name="Kay M."/>
            <person name="Kershaw J.K."/>
            <person name="Kibukawa M."/>
            <person name="Kimberley A.M."/>
            <person name="King A."/>
            <person name="Knights A.J."/>
            <person name="Lad H."/>
            <person name="Laird G."/>
            <person name="Lawlor S."/>
            <person name="Leongamornlert D.A."/>
            <person name="Lloyd D.M."/>
            <person name="Loveland J."/>
            <person name="Lovell J."/>
            <person name="Lush M.J."/>
            <person name="Lyne R."/>
            <person name="Martin S."/>
            <person name="Mashreghi-Mohammadi M."/>
            <person name="Matthews L."/>
            <person name="Matthews N.S.W."/>
            <person name="McLaren S."/>
            <person name="Milne S."/>
            <person name="Mistry S."/>
            <person name="Moore M.J.F."/>
            <person name="Nickerson T."/>
            <person name="O'Dell C.N."/>
            <person name="Oliver K."/>
            <person name="Palmeiri A."/>
            <person name="Palmer S.A."/>
            <person name="Parker A."/>
            <person name="Patel D."/>
            <person name="Pearce A.V."/>
            <person name="Peck A.I."/>
            <person name="Pelan S."/>
            <person name="Phelps K."/>
            <person name="Phillimore B.J."/>
            <person name="Plumb R."/>
            <person name="Rajan J."/>
            <person name="Raymond C."/>
            <person name="Rouse G."/>
            <person name="Saenphimmachak C."/>
            <person name="Sehra H.K."/>
            <person name="Sheridan E."/>
            <person name="Shownkeen R."/>
            <person name="Sims S."/>
            <person name="Skuce C.D."/>
            <person name="Smith M."/>
            <person name="Steward C."/>
            <person name="Subramanian S."/>
            <person name="Sycamore N."/>
            <person name="Tracey A."/>
            <person name="Tromans A."/>
            <person name="Van Helmond Z."/>
            <person name="Wall M."/>
            <person name="Wallis J.M."/>
            <person name="White S."/>
            <person name="Whitehead S.L."/>
            <person name="Wilkinson J.E."/>
            <person name="Willey D.L."/>
            <person name="Williams H."/>
            <person name="Wilming L."/>
            <person name="Wray P.W."/>
            <person name="Wu Z."/>
            <person name="Coulson A."/>
            <person name="Vaudin M."/>
            <person name="Sulston J.E."/>
            <person name="Durbin R.M."/>
            <person name="Hubbard T."/>
            <person name="Wooster R."/>
            <person name="Dunham I."/>
            <person name="Carter N.P."/>
            <person name="McVean G."/>
            <person name="Ross M.T."/>
            <person name="Harrow J."/>
            <person name="Olson M.V."/>
            <person name="Beck S."/>
            <person name="Rogers J."/>
            <person name="Bentley D.R."/>
        </authorList>
    </citation>
    <scope>NUCLEOTIDE SEQUENCE [LARGE SCALE GENOMIC DNA]</scope>
</reference>
<reference key="3">
    <citation type="journal article" date="2004" name="Genome Res.">
        <title>The status, quality, and expansion of the NIH full-length cDNA project: the Mammalian Gene Collection (MGC).</title>
        <authorList>
            <consortium name="The MGC Project Team"/>
        </authorList>
    </citation>
    <scope>NUCLEOTIDE SEQUENCE [LARGE SCALE MRNA]</scope>
    <source>
        <tissue>Gall bladder</tissue>
    </source>
</reference>
<reference key="4">
    <citation type="journal article" date="2005" name="Nat. Biotechnol.">
        <title>Immunoaffinity profiling of tyrosine phosphorylation in cancer cells.</title>
        <authorList>
            <person name="Rush J."/>
            <person name="Moritz A."/>
            <person name="Lee K.A."/>
            <person name="Guo A."/>
            <person name="Goss V.L."/>
            <person name="Spek E.J."/>
            <person name="Zhang H."/>
            <person name="Zha X.-M."/>
            <person name="Polakiewicz R.D."/>
            <person name="Comb M.J."/>
        </authorList>
    </citation>
    <scope>PHOSPHORYLATION [LARGE SCALE ANALYSIS] AT TYR-281</scope>
    <scope>IDENTIFICATION BY MASS SPECTROMETRY [LARGE SCALE ANALYSIS]</scope>
</reference>
<gene>
    <name type="primary">ZNF670</name>
</gene>
<evidence type="ECO:0000255" key="1">
    <source>
        <dbReference type="PROSITE-ProRule" id="PRU00042"/>
    </source>
</evidence>
<evidence type="ECO:0000255" key="2">
    <source>
        <dbReference type="PROSITE-ProRule" id="PRU00119"/>
    </source>
</evidence>
<evidence type="ECO:0000305" key="3"/>
<evidence type="ECO:0007744" key="4">
    <source>
    </source>
</evidence>
<comment type="function">
    <text>May be involved in transcriptional regulation.</text>
</comment>
<comment type="interaction">
    <interactant intactId="EBI-745276">
        <id>Q9BS34</id>
    </interactant>
    <interactant intactId="EBI-11975051">
        <id>Q8TD16-2</id>
        <label>BICD2</label>
    </interactant>
    <organismsDiffer>false</organismsDiffer>
    <experiments>3</experiments>
</comment>
<comment type="interaction">
    <interactant intactId="EBI-745276">
        <id>Q9BS34</id>
    </interactant>
    <interactant intactId="EBI-3866279">
        <id>Q9BWT7</id>
        <label>CARD10</label>
    </interactant>
    <organismsDiffer>false</organismsDiffer>
    <experiments>3</experiments>
</comment>
<comment type="interaction">
    <interactant intactId="EBI-745276">
        <id>Q9BS34</id>
    </interactant>
    <interactant intactId="EBI-10961312">
        <id>Q8IYE1</id>
        <label>CCDC13</label>
    </interactant>
    <organismsDiffer>false</organismsDiffer>
    <experiments>3</experiments>
</comment>
<comment type="interaction">
    <interactant intactId="EBI-745276">
        <id>Q9BS34</id>
    </interactant>
    <interactant intactId="EBI-748961">
        <id>O95273</id>
        <label>CCNDBP1</label>
    </interactant>
    <organismsDiffer>false</organismsDiffer>
    <experiments>6</experiments>
</comment>
<comment type="interaction">
    <interactant intactId="EBI-745276">
        <id>Q9BS34</id>
    </interactant>
    <interactant intactId="EBI-347804">
        <id>P68400</id>
        <label>CSNK2A1</label>
    </interactant>
    <organismsDiffer>false</organismsDiffer>
    <experiments>3</experiments>
</comment>
<comment type="interaction">
    <interactant intactId="EBI-745276">
        <id>Q9BS34</id>
    </interactant>
    <interactant intactId="EBI-347451">
        <id>P19784</id>
        <label>CSNK2A2</label>
    </interactant>
    <organismsDiffer>false</organismsDiffer>
    <experiments>4</experiments>
</comment>
<comment type="interaction">
    <interactant intactId="EBI-745276">
        <id>Q9BS34</id>
    </interactant>
    <interactant intactId="EBI-743414">
        <id>O95967</id>
        <label>EFEMP2</label>
    </interactant>
    <organismsDiffer>false</organismsDiffer>
    <experiments>3</experiments>
</comment>
<comment type="interaction">
    <interactant intactId="EBI-745276">
        <id>Q9BS34</id>
    </interactant>
    <interactant intactId="EBI-747754">
        <id>P28799</id>
        <label>GRN</label>
    </interactant>
    <organismsDiffer>false</organismsDiffer>
    <experiments>3</experiments>
</comment>
<comment type="interaction">
    <interactant intactId="EBI-745276">
        <id>Q9BS34</id>
    </interactant>
    <interactant intactId="EBI-352682">
        <id>P04792</id>
        <label>HSPB1</label>
    </interactant>
    <organismsDiffer>false</organismsDiffer>
    <experiments>3</experiments>
</comment>
<comment type="interaction">
    <interactant intactId="EBI-745276">
        <id>Q9BS34</id>
    </interactant>
    <interactant intactId="EBI-10975473">
        <id>O60333-2</id>
        <label>KIF1B</label>
    </interactant>
    <organismsDiffer>false</organismsDiffer>
    <experiments>3</experiments>
</comment>
<comment type="interaction">
    <interactant intactId="EBI-745276">
        <id>Q9BS34</id>
    </interactant>
    <interactant intactId="EBI-10172150">
        <id>P60370</id>
        <label>KRTAP10-5</label>
    </interactant>
    <organismsDiffer>false</organismsDiffer>
    <experiments>3</experiments>
</comment>
<comment type="interaction">
    <interactant intactId="EBI-745276">
        <id>Q9BS34</id>
    </interactant>
    <interactant intactId="EBI-10172290">
        <id>P60409</id>
        <label>KRTAP10-7</label>
    </interactant>
    <organismsDiffer>false</organismsDiffer>
    <experiments>3</experiments>
</comment>
<comment type="interaction">
    <interactant intactId="EBI-745276">
        <id>Q9BS34</id>
    </interactant>
    <interactant intactId="EBI-724076">
        <id>Q99750</id>
        <label>MDFI</label>
    </interactant>
    <organismsDiffer>false</organismsDiffer>
    <experiments>5</experiments>
</comment>
<comment type="interaction">
    <interactant intactId="EBI-745276">
        <id>Q9BS34</id>
    </interactant>
    <interactant intactId="EBI-742948">
        <id>Q5JR59</id>
        <label>MTUS2</label>
    </interactant>
    <organismsDiffer>false</organismsDiffer>
    <experiments>3</experiments>
</comment>
<comment type="interaction">
    <interactant intactId="EBI-745276">
        <id>Q9BS34</id>
    </interactant>
    <interactant intactId="EBI-748974">
        <id>Q96CV9</id>
        <label>OPTN</label>
    </interactant>
    <organismsDiffer>false</organismsDiffer>
    <experiments>6</experiments>
</comment>
<comment type="interaction">
    <interactant intactId="EBI-745276">
        <id>Q9BS34</id>
    </interactant>
    <interactant intactId="EBI-396669">
        <id>Q9Y3C5</id>
        <label>RNF11</label>
    </interactant>
    <organismsDiffer>false</organismsDiffer>
    <experiments>3</experiments>
</comment>
<comment type="interaction">
    <interactant intactId="EBI-745276">
        <id>Q9BS34</id>
    </interactant>
    <interactant intactId="EBI-5235340">
        <id>Q7Z699</id>
        <label>SPRED1</label>
    </interactant>
    <organismsDiffer>false</organismsDiffer>
    <experiments>3</experiments>
</comment>
<comment type="interaction">
    <interactant intactId="EBI-745276">
        <id>Q9BS34</id>
    </interactant>
    <interactant intactId="EBI-349968">
        <id>O43463</id>
        <label>SUV39H1</label>
    </interactant>
    <organismsDiffer>false</organismsDiffer>
    <experiments>2</experiments>
</comment>
<comment type="interaction">
    <interactant intactId="EBI-745276">
        <id>Q9BS34</id>
    </interactant>
    <interactant intactId="EBI-11955057">
        <id>Q8N8B7-2</id>
        <label>TCEANC</label>
    </interactant>
    <organismsDiffer>false</organismsDiffer>
    <experiments>3</experiments>
</comment>
<comment type="interaction">
    <interactant intactId="EBI-745276">
        <id>Q9BS34</id>
    </interactant>
    <interactant intactId="EBI-725997">
        <id>Q8WV44</id>
        <label>TRIM41</label>
    </interactant>
    <organismsDiffer>false</organismsDiffer>
    <experiments>6</experiments>
</comment>
<comment type="interaction">
    <interactant intactId="EBI-745276">
        <id>Q9BS34</id>
    </interactant>
    <interactant intactId="EBI-744794">
        <id>Q9BZW7</id>
        <label>TSGA10</label>
    </interactant>
    <organismsDiffer>false</organismsDiffer>
    <experiments>3</experiments>
</comment>
<comment type="interaction">
    <interactant intactId="EBI-745276">
        <id>Q9BS34</id>
    </interactant>
    <interactant intactId="EBI-720609">
        <id>O76024</id>
        <label>WFS1</label>
    </interactant>
    <organismsDiffer>false</organismsDiffer>
    <experiments>3</experiments>
</comment>
<comment type="subcellular location">
    <subcellularLocation>
        <location evidence="3">Nucleus</location>
    </subcellularLocation>
</comment>
<comment type="similarity">
    <text evidence="3">Belongs to the krueppel C2H2-type zinc-finger protein family.</text>
</comment>
<protein>
    <recommendedName>
        <fullName>Zinc finger protein 670</fullName>
    </recommendedName>
</protein>
<dbReference type="EMBL" id="AK074774">
    <property type="protein sequence ID" value="BAC11200.1"/>
    <property type="molecule type" value="mRNA"/>
</dbReference>
<dbReference type="EMBL" id="AL512637">
    <property type="status" value="NOT_ANNOTATED_CDS"/>
    <property type="molecule type" value="Genomic_DNA"/>
</dbReference>
<dbReference type="EMBL" id="AL627095">
    <property type="status" value="NOT_ANNOTATED_CDS"/>
    <property type="molecule type" value="Genomic_DNA"/>
</dbReference>
<dbReference type="EMBL" id="BC005360">
    <property type="protein sequence ID" value="AAH05360.1"/>
    <property type="molecule type" value="mRNA"/>
</dbReference>
<dbReference type="CCDS" id="CCDS31087.1"/>
<dbReference type="RefSeq" id="NP_149990.1">
    <property type="nucleotide sequence ID" value="NM_033213.5"/>
</dbReference>
<dbReference type="SMR" id="Q9BS34"/>
<dbReference type="BioGRID" id="125029">
    <property type="interactions" value="25"/>
</dbReference>
<dbReference type="FunCoup" id="Q9BS34">
    <property type="interactions" value="47"/>
</dbReference>
<dbReference type="IntAct" id="Q9BS34">
    <property type="interactions" value="28"/>
</dbReference>
<dbReference type="MINT" id="Q9BS34"/>
<dbReference type="STRING" id="9606.ENSP00000355459"/>
<dbReference type="iPTMnet" id="Q9BS34"/>
<dbReference type="PhosphoSitePlus" id="Q9BS34"/>
<dbReference type="BioMuta" id="ZNF670"/>
<dbReference type="DMDM" id="74761228"/>
<dbReference type="jPOST" id="Q9BS34"/>
<dbReference type="MassIVE" id="Q9BS34"/>
<dbReference type="PaxDb" id="9606-ENSP00000355459"/>
<dbReference type="PeptideAtlas" id="Q9BS34"/>
<dbReference type="ProteomicsDB" id="78863"/>
<dbReference type="Pumba" id="Q9BS34"/>
<dbReference type="Antibodypedia" id="74455">
    <property type="antibodies" value="98 antibodies from 15 providers"/>
</dbReference>
<dbReference type="DNASU" id="93474"/>
<dbReference type="Ensembl" id="ENST00000366503.3">
    <property type="protein sequence ID" value="ENSP00000355459.2"/>
    <property type="gene ID" value="ENSG00000277462.2"/>
</dbReference>
<dbReference type="GeneID" id="93474"/>
<dbReference type="KEGG" id="hsa:93474"/>
<dbReference type="MANE-Select" id="ENST00000366503.3">
    <property type="protein sequence ID" value="ENSP00000355459.2"/>
    <property type="RefSeq nucleotide sequence ID" value="NM_033213.5"/>
    <property type="RefSeq protein sequence ID" value="NP_149990.1"/>
</dbReference>
<dbReference type="UCSC" id="uc001icd.3">
    <property type="organism name" value="human"/>
</dbReference>
<dbReference type="AGR" id="HGNC:28167"/>
<dbReference type="CTD" id="93474"/>
<dbReference type="DisGeNET" id="93474"/>
<dbReference type="GeneCards" id="ZNF670"/>
<dbReference type="HGNC" id="HGNC:28167">
    <property type="gene designation" value="ZNF670"/>
</dbReference>
<dbReference type="HPA" id="ENSG00000277462">
    <property type="expression patterns" value="Low tissue specificity"/>
</dbReference>
<dbReference type="neXtProt" id="NX_Q9BS34"/>
<dbReference type="OpenTargets" id="ENSG00000277462"/>
<dbReference type="PharmGKB" id="PA142670517"/>
<dbReference type="VEuPathDB" id="HostDB:ENSG00000277462"/>
<dbReference type="eggNOG" id="KOG1721">
    <property type="taxonomic scope" value="Eukaryota"/>
</dbReference>
<dbReference type="GeneTree" id="ENSGT00940000164696"/>
<dbReference type="HOGENOM" id="CLU_002678_44_3_1"/>
<dbReference type="InParanoid" id="Q9BS34"/>
<dbReference type="OMA" id="HIGNKLF"/>
<dbReference type="OrthoDB" id="6077919at2759"/>
<dbReference type="PAN-GO" id="Q9BS34">
    <property type="GO annotations" value="4 GO annotations based on evolutionary models"/>
</dbReference>
<dbReference type="PhylomeDB" id="Q9BS34"/>
<dbReference type="TreeFam" id="TF338854"/>
<dbReference type="PathwayCommons" id="Q9BS34"/>
<dbReference type="Reactome" id="R-HSA-212436">
    <property type="pathway name" value="Generic Transcription Pathway"/>
</dbReference>
<dbReference type="SignaLink" id="Q9BS34"/>
<dbReference type="BioGRID-ORCS" id="93474">
    <property type="hits" value="15 hits in 1170 CRISPR screens"/>
</dbReference>
<dbReference type="GenomeRNAi" id="93474"/>
<dbReference type="Pharos" id="Q9BS34">
    <property type="development level" value="Tdark"/>
</dbReference>
<dbReference type="PRO" id="PR:Q9BS34"/>
<dbReference type="Proteomes" id="UP000005640">
    <property type="component" value="Chromosome 1"/>
</dbReference>
<dbReference type="RNAct" id="Q9BS34">
    <property type="molecule type" value="protein"/>
</dbReference>
<dbReference type="Bgee" id="ENSG00000277462">
    <property type="expression patterns" value="Expressed in cortical plate and 124 other cell types or tissues"/>
</dbReference>
<dbReference type="GO" id="GO:0005634">
    <property type="term" value="C:nucleus"/>
    <property type="evidence" value="ECO:0000318"/>
    <property type="project" value="GO_Central"/>
</dbReference>
<dbReference type="GO" id="GO:0000981">
    <property type="term" value="F:DNA-binding transcription factor activity, RNA polymerase II-specific"/>
    <property type="evidence" value="ECO:0000318"/>
    <property type="project" value="GO_Central"/>
</dbReference>
<dbReference type="GO" id="GO:0000978">
    <property type="term" value="F:RNA polymerase II cis-regulatory region sequence-specific DNA binding"/>
    <property type="evidence" value="ECO:0000318"/>
    <property type="project" value="GO_Central"/>
</dbReference>
<dbReference type="GO" id="GO:0008270">
    <property type="term" value="F:zinc ion binding"/>
    <property type="evidence" value="ECO:0007669"/>
    <property type="project" value="UniProtKB-KW"/>
</dbReference>
<dbReference type="GO" id="GO:0006629">
    <property type="term" value="P:lipid metabolic process"/>
    <property type="evidence" value="ECO:0000314"/>
    <property type="project" value="MGI"/>
</dbReference>
<dbReference type="GO" id="GO:0006357">
    <property type="term" value="P:regulation of transcription by RNA polymerase II"/>
    <property type="evidence" value="ECO:0000318"/>
    <property type="project" value="GO_Central"/>
</dbReference>
<dbReference type="CDD" id="cd07765">
    <property type="entry name" value="KRAB_A-box"/>
    <property type="match status" value="1"/>
</dbReference>
<dbReference type="FunFam" id="3.30.160.60:FF:000116">
    <property type="entry name" value="Zinc finger protein 107"/>
    <property type="match status" value="1"/>
</dbReference>
<dbReference type="FunFam" id="3.30.160.60:FF:000770">
    <property type="entry name" value="zinc finger protein 16"/>
    <property type="match status" value="1"/>
</dbReference>
<dbReference type="FunFam" id="3.30.160.60:FF:000773">
    <property type="entry name" value="Zinc finger protein 44"/>
    <property type="match status" value="1"/>
</dbReference>
<dbReference type="FunFam" id="3.30.160.60:FF:002254">
    <property type="entry name" value="Zinc finger protein 540"/>
    <property type="match status" value="1"/>
</dbReference>
<dbReference type="FunFam" id="3.30.160.60:FF:000371">
    <property type="entry name" value="Zinc finger protein 555"/>
    <property type="match status" value="1"/>
</dbReference>
<dbReference type="FunFam" id="3.30.160.60:FF:001959">
    <property type="entry name" value="Zinc finger protein 564"/>
    <property type="match status" value="1"/>
</dbReference>
<dbReference type="FunFam" id="3.30.160.60:FF:001270">
    <property type="entry name" value="zinc finger protein 583 isoform X1"/>
    <property type="match status" value="1"/>
</dbReference>
<dbReference type="FunFam" id="3.30.160.60:FF:000292">
    <property type="entry name" value="zinc finger protein 619"/>
    <property type="match status" value="1"/>
</dbReference>
<dbReference type="FunFam" id="3.30.160.60:FF:002151">
    <property type="entry name" value="Zinc finger protein 670"/>
    <property type="match status" value="1"/>
</dbReference>
<dbReference type="Gene3D" id="6.10.140.140">
    <property type="match status" value="1"/>
</dbReference>
<dbReference type="Gene3D" id="3.30.160.60">
    <property type="entry name" value="Classic Zinc Finger"/>
    <property type="match status" value="9"/>
</dbReference>
<dbReference type="InterPro" id="IPR001909">
    <property type="entry name" value="KRAB"/>
</dbReference>
<dbReference type="InterPro" id="IPR036051">
    <property type="entry name" value="KRAB_dom_sf"/>
</dbReference>
<dbReference type="InterPro" id="IPR036236">
    <property type="entry name" value="Znf_C2H2_sf"/>
</dbReference>
<dbReference type="InterPro" id="IPR013087">
    <property type="entry name" value="Znf_C2H2_type"/>
</dbReference>
<dbReference type="PANTHER" id="PTHR24393">
    <property type="entry name" value="ZINC FINGER PROTEIN"/>
    <property type="match status" value="1"/>
</dbReference>
<dbReference type="PANTHER" id="PTHR24393:SF142">
    <property type="entry name" value="ZINC FINGER PROTEIN 709-LIKE"/>
    <property type="match status" value="1"/>
</dbReference>
<dbReference type="Pfam" id="PF01352">
    <property type="entry name" value="KRAB"/>
    <property type="match status" value="1"/>
</dbReference>
<dbReference type="Pfam" id="PF00096">
    <property type="entry name" value="zf-C2H2"/>
    <property type="match status" value="5"/>
</dbReference>
<dbReference type="Pfam" id="PF13465">
    <property type="entry name" value="zf-H2C2_2"/>
    <property type="match status" value="1"/>
</dbReference>
<dbReference type="PRINTS" id="PR00048">
    <property type="entry name" value="ZINCFINGER"/>
</dbReference>
<dbReference type="SMART" id="SM00349">
    <property type="entry name" value="KRAB"/>
    <property type="match status" value="1"/>
</dbReference>
<dbReference type="SMART" id="SM00355">
    <property type="entry name" value="ZnF_C2H2"/>
    <property type="match status" value="9"/>
</dbReference>
<dbReference type="SUPFAM" id="SSF57667">
    <property type="entry name" value="beta-beta-alpha zinc fingers"/>
    <property type="match status" value="6"/>
</dbReference>
<dbReference type="SUPFAM" id="SSF109640">
    <property type="entry name" value="KRAB domain (Kruppel-associated box)"/>
    <property type="match status" value="1"/>
</dbReference>
<dbReference type="PROSITE" id="PS50805">
    <property type="entry name" value="KRAB"/>
    <property type="match status" value="1"/>
</dbReference>
<dbReference type="PROSITE" id="PS00028">
    <property type="entry name" value="ZINC_FINGER_C2H2_1"/>
    <property type="match status" value="8"/>
</dbReference>
<dbReference type="PROSITE" id="PS50157">
    <property type="entry name" value="ZINC_FINGER_C2H2_2"/>
    <property type="match status" value="9"/>
</dbReference>
<sequence length="389" mass="44603">MDSVSFEDVAVAFTQEEWALLDPSQKNLYRDVMQEIFRNLASVGNKSEDQNIQDDFKNPGRNLSSHVVERLFEIKEGSQYGETFSQDSNLNLNKKVSTGVKPCECSVCGKVFICHSALHRHILSHIGNKLFECEECPEKLYHCKQCGKAFISLTSVDRHMVTHTSNGPYKGPVYEKPFDFPSVFQMPQSTYTGEKTYKCKHCDKAFNYSSYLREHERTHTGEKPYACKKCGKSFTFSSSLRQHERSHTGEKPYECKECGKAFSRSTYLGIHERTHTGEKPYECIKCGKAFRCSRVLRVHERTHSGEKPYECKQCGKAFKYSSNLCEHERTHTGVKPYGCKECGKSFTSSSALRSHERTHTGEKPYECKKCGKAFSCSSSLRKHERAYMW</sequence>
<organism>
    <name type="scientific">Homo sapiens</name>
    <name type="common">Human</name>
    <dbReference type="NCBI Taxonomy" id="9606"/>
    <lineage>
        <taxon>Eukaryota</taxon>
        <taxon>Metazoa</taxon>
        <taxon>Chordata</taxon>
        <taxon>Craniata</taxon>
        <taxon>Vertebrata</taxon>
        <taxon>Euteleostomi</taxon>
        <taxon>Mammalia</taxon>
        <taxon>Eutheria</taxon>
        <taxon>Euarchontoglires</taxon>
        <taxon>Primates</taxon>
        <taxon>Haplorrhini</taxon>
        <taxon>Catarrhini</taxon>
        <taxon>Hominidae</taxon>
        <taxon>Homo</taxon>
    </lineage>
</organism>
<keyword id="KW-0238">DNA-binding</keyword>
<keyword id="KW-0479">Metal-binding</keyword>
<keyword id="KW-0539">Nucleus</keyword>
<keyword id="KW-0597">Phosphoprotein</keyword>
<keyword id="KW-1267">Proteomics identification</keyword>
<keyword id="KW-1185">Reference proteome</keyword>
<keyword id="KW-0677">Repeat</keyword>
<keyword id="KW-0804">Transcription</keyword>
<keyword id="KW-0805">Transcription regulation</keyword>
<keyword id="KW-0862">Zinc</keyword>
<keyword id="KW-0863">Zinc-finger</keyword>
<accession>Q9BS34</accession>